<protein>
    <recommendedName>
        <fullName evidence="1">Large ribosomal subunit protein bL12</fullName>
    </recommendedName>
    <alternativeName>
        <fullName evidence="2">50S ribosomal protein L7/L12</fullName>
    </alternativeName>
</protein>
<feature type="chain" id="PRO_1000006960" description="Large ribosomal subunit protein bL12">
    <location>
        <begin position="1"/>
        <end position="124"/>
    </location>
</feature>
<keyword id="KW-0687">Ribonucleoprotein</keyword>
<keyword id="KW-0689">Ribosomal protein</keyword>
<proteinExistence type="inferred from homology"/>
<reference key="1">
    <citation type="journal article" date="2007" name="PLoS Biol.">
        <title>Evolution of symbiotic bacteria in the distal human intestine.</title>
        <authorList>
            <person name="Xu J."/>
            <person name="Mahowald M.A."/>
            <person name="Ley R.E."/>
            <person name="Lozupone C.A."/>
            <person name="Hamady M."/>
            <person name="Martens E.C."/>
            <person name="Henrissat B."/>
            <person name="Coutinho P.M."/>
            <person name="Minx P."/>
            <person name="Latreille P."/>
            <person name="Cordum H."/>
            <person name="Van Brunt A."/>
            <person name="Kim K."/>
            <person name="Fulton R.S."/>
            <person name="Fulton L.A."/>
            <person name="Clifton S.W."/>
            <person name="Wilson R.K."/>
            <person name="Knight R.D."/>
            <person name="Gordon J.I."/>
        </authorList>
    </citation>
    <scope>NUCLEOTIDE SEQUENCE [LARGE SCALE GENOMIC DNA]</scope>
    <source>
        <strain>ATCC 8482 / DSM 1447 / JCM 5826 / CCUG 4940 / NBRC 14291 / NCTC 11154</strain>
    </source>
</reference>
<evidence type="ECO:0000255" key="1">
    <source>
        <dbReference type="HAMAP-Rule" id="MF_00368"/>
    </source>
</evidence>
<evidence type="ECO:0000305" key="2"/>
<sequence>MADLKAFAEQLVNLTVKEVNELATILKEEYGIEPAAAAVAVAAGPAAGAAAAEEKTSFDVVLKSAGAAKLQVVKAVKEACGLGLKEAKDMVDGAPSTVKEGLAKDEAESLKKTLEEAGAEVELK</sequence>
<organism>
    <name type="scientific">Phocaeicola vulgatus (strain ATCC 8482 / DSM 1447 / JCM 5826 / CCUG 4940 / NBRC 14291 / NCTC 11154)</name>
    <name type="common">Bacteroides vulgatus</name>
    <dbReference type="NCBI Taxonomy" id="435590"/>
    <lineage>
        <taxon>Bacteria</taxon>
        <taxon>Pseudomonadati</taxon>
        <taxon>Bacteroidota</taxon>
        <taxon>Bacteroidia</taxon>
        <taxon>Bacteroidales</taxon>
        <taxon>Bacteroidaceae</taxon>
        <taxon>Phocaeicola</taxon>
    </lineage>
</organism>
<dbReference type="EMBL" id="CP000139">
    <property type="protein sequence ID" value="ABR38518.1"/>
    <property type="molecule type" value="Genomic_DNA"/>
</dbReference>
<dbReference type="RefSeq" id="WP_005844832.1">
    <property type="nucleotide sequence ID" value="NZ_JANSWM010000035.1"/>
</dbReference>
<dbReference type="SMR" id="A6KYK4"/>
<dbReference type="STRING" id="435590.BVU_0814"/>
<dbReference type="PaxDb" id="435590-BVU_0814"/>
<dbReference type="GeneID" id="93449031"/>
<dbReference type="KEGG" id="bvu:BVU_0814"/>
<dbReference type="eggNOG" id="COG0222">
    <property type="taxonomic scope" value="Bacteria"/>
</dbReference>
<dbReference type="HOGENOM" id="CLU_086499_3_1_10"/>
<dbReference type="BioCyc" id="BVUL435590:G1G59-856-MONOMER"/>
<dbReference type="Proteomes" id="UP000002861">
    <property type="component" value="Chromosome"/>
</dbReference>
<dbReference type="GO" id="GO:0022625">
    <property type="term" value="C:cytosolic large ribosomal subunit"/>
    <property type="evidence" value="ECO:0007669"/>
    <property type="project" value="TreeGrafter"/>
</dbReference>
<dbReference type="GO" id="GO:0003729">
    <property type="term" value="F:mRNA binding"/>
    <property type="evidence" value="ECO:0007669"/>
    <property type="project" value="TreeGrafter"/>
</dbReference>
<dbReference type="GO" id="GO:0003735">
    <property type="term" value="F:structural constituent of ribosome"/>
    <property type="evidence" value="ECO:0007669"/>
    <property type="project" value="InterPro"/>
</dbReference>
<dbReference type="GO" id="GO:0006412">
    <property type="term" value="P:translation"/>
    <property type="evidence" value="ECO:0007669"/>
    <property type="project" value="UniProtKB-UniRule"/>
</dbReference>
<dbReference type="CDD" id="cd00387">
    <property type="entry name" value="Ribosomal_L7_L12"/>
    <property type="match status" value="1"/>
</dbReference>
<dbReference type="FunFam" id="1.20.5.710:FF:000011">
    <property type="entry name" value="50S ribosomal protein L7/L12"/>
    <property type="match status" value="1"/>
</dbReference>
<dbReference type="FunFam" id="3.30.1390.10:FF:000001">
    <property type="entry name" value="50S ribosomal protein L7/L12"/>
    <property type="match status" value="1"/>
</dbReference>
<dbReference type="Gene3D" id="3.30.1390.10">
    <property type="match status" value="1"/>
</dbReference>
<dbReference type="Gene3D" id="1.20.5.710">
    <property type="entry name" value="Single helix bin"/>
    <property type="match status" value="1"/>
</dbReference>
<dbReference type="HAMAP" id="MF_00368">
    <property type="entry name" value="Ribosomal_bL12"/>
    <property type="match status" value="1"/>
</dbReference>
<dbReference type="InterPro" id="IPR000206">
    <property type="entry name" value="Ribosomal_bL12"/>
</dbReference>
<dbReference type="InterPro" id="IPR013823">
    <property type="entry name" value="Ribosomal_bL12_C"/>
</dbReference>
<dbReference type="InterPro" id="IPR014719">
    <property type="entry name" value="Ribosomal_bL12_C/ClpS-like"/>
</dbReference>
<dbReference type="InterPro" id="IPR008932">
    <property type="entry name" value="Ribosomal_bL12_oligo"/>
</dbReference>
<dbReference type="InterPro" id="IPR036235">
    <property type="entry name" value="Ribosomal_bL12_oligo_N_sf"/>
</dbReference>
<dbReference type="NCBIfam" id="TIGR00855">
    <property type="entry name" value="L12"/>
    <property type="match status" value="1"/>
</dbReference>
<dbReference type="PANTHER" id="PTHR45987">
    <property type="entry name" value="39S RIBOSOMAL PROTEIN L12"/>
    <property type="match status" value="1"/>
</dbReference>
<dbReference type="PANTHER" id="PTHR45987:SF4">
    <property type="entry name" value="LARGE RIBOSOMAL SUBUNIT PROTEIN BL12M"/>
    <property type="match status" value="1"/>
</dbReference>
<dbReference type="Pfam" id="PF00542">
    <property type="entry name" value="Ribosomal_L12"/>
    <property type="match status" value="1"/>
</dbReference>
<dbReference type="Pfam" id="PF16320">
    <property type="entry name" value="Ribosomal_L12_N"/>
    <property type="match status" value="1"/>
</dbReference>
<dbReference type="SUPFAM" id="SSF54736">
    <property type="entry name" value="ClpS-like"/>
    <property type="match status" value="1"/>
</dbReference>
<dbReference type="SUPFAM" id="SSF48300">
    <property type="entry name" value="Ribosomal protein L7/12, oligomerisation (N-terminal) domain"/>
    <property type="match status" value="1"/>
</dbReference>
<name>RL7_PHOV8</name>
<comment type="function">
    <text evidence="1">Forms part of the ribosomal stalk which helps the ribosome interact with GTP-bound translation factors. Is thus essential for accurate translation.</text>
</comment>
<comment type="subunit">
    <text evidence="1">Homodimer. Part of the ribosomal stalk of the 50S ribosomal subunit. Forms a multimeric L10(L12)X complex, where L10 forms an elongated spine to which 2 to 4 L12 dimers bind in a sequential fashion. Binds GTP-bound translation factors.</text>
</comment>
<comment type="similarity">
    <text evidence="1">Belongs to the bacterial ribosomal protein bL12 family.</text>
</comment>
<accession>A6KYK4</accession>
<gene>
    <name evidence="1" type="primary">rplL</name>
    <name type="ordered locus">BVU_0814</name>
</gene>